<sequence>MDFAPELITIGQKAKDAARKLAYAGTAAKNKALLAMAEALLNHEQKILEANRKDVEAAIQKGTKKSLVNRLALTSEGIRQMSDALKEVVNLGDPVGEGEFWTRPNGLRIQRTRVPLGVVAMIYEARPNVTVDAAALCLKSGNAVILRGGSEAIESNKILSKVIAGAAESQGMPTACIQLLENTNRQWVQQLMKMNGYVDVIIPRGGAGLIETVVKEATVPVIETGTGVCHAYVDGEADLAKGVSIVFNAKTQKPGVCNALEAVLVNEAVAQEFLPLLGEKFRDYGVEIRGCEKTCAILPYAAKATEEDWGTEYLDLIISAKVVQGVDEAMDHIYQYGTKHSETIITENYTTAQRFLNEVDAAAVYVNASTRFTDGGRFGFGAEIGISTQKLHARGPMGLQALTTMKYMVYGEDHIVT</sequence>
<protein>
    <recommendedName>
        <fullName evidence="1">Gamma-glutamyl phosphate reductase</fullName>
        <shortName evidence="1">GPR</shortName>
        <ecNumber evidence="1">1.2.1.41</ecNumber>
    </recommendedName>
    <alternativeName>
        <fullName evidence="1">Glutamate-5-semialdehyde dehydrogenase</fullName>
    </alternativeName>
    <alternativeName>
        <fullName evidence="1">Glutamyl-gamma-semialdehyde dehydrogenase</fullName>
        <shortName evidence="1">GSA dehydrogenase</shortName>
    </alternativeName>
</protein>
<accession>Q24XR6</accession>
<keyword id="KW-0028">Amino-acid biosynthesis</keyword>
<keyword id="KW-0963">Cytoplasm</keyword>
<keyword id="KW-0521">NADP</keyword>
<keyword id="KW-0560">Oxidoreductase</keyword>
<keyword id="KW-0641">Proline biosynthesis</keyword>
<keyword id="KW-1185">Reference proteome</keyword>
<feature type="chain" id="PRO_0000252570" description="Gamma-glutamyl phosphate reductase">
    <location>
        <begin position="1"/>
        <end position="417"/>
    </location>
</feature>
<comment type="function">
    <text evidence="1">Catalyzes the NADPH-dependent reduction of L-glutamate 5-phosphate into L-glutamate 5-semialdehyde and phosphate. The product spontaneously undergoes cyclization to form 1-pyrroline-5-carboxylate.</text>
</comment>
<comment type="catalytic activity">
    <reaction evidence="1">
        <text>L-glutamate 5-semialdehyde + phosphate + NADP(+) = L-glutamyl 5-phosphate + NADPH + H(+)</text>
        <dbReference type="Rhea" id="RHEA:19541"/>
        <dbReference type="ChEBI" id="CHEBI:15378"/>
        <dbReference type="ChEBI" id="CHEBI:43474"/>
        <dbReference type="ChEBI" id="CHEBI:57783"/>
        <dbReference type="ChEBI" id="CHEBI:58066"/>
        <dbReference type="ChEBI" id="CHEBI:58274"/>
        <dbReference type="ChEBI" id="CHEBI:58349"/>
        <dbReference type="EC" id="1.2.1.41"/>
    </reaction>
</comment>
<comment type="pathway">
    <text evidence="1">Amino-acid biosynthesis; L-proline biosynthesis; L-glutamate 5-semialdehyde from L-glutamate: step 2/2.</text>
</comment>
<comment type="subcellular location">
    <subcellularLocation>
        <location evidence="1">Cytoplasm</location>
    </subcellularLocation>
</comment>
<comment type="similarity">
    <text evidence="1">Belongs to the gamma-glutamyl phosphate reductase family.</text>
</comment>
<reference key="1">
    <citation type="journal article" date="2006" name="J. Bacteriol.">
        <title>Complete genome sequence of the dehalorespiring bacterium Desulfitobacterium hafniense Y51 and comparison with Dehalococcoides ethenogenes 195.</title>
        <authorList>
            <person name="Nonaka H."/>
            <person name="Keresztes G."/>
            <person name="Shinoda Y."/>
            <person name="Ikenaga Y."/>
            <person name="Abe M."/>
            <person name="Naito K."/>
            <person name="Inatomi K."/>
            <person name="Furukawa K."/>
            <person name="Inui M."/>
            <person name="Yukawa H."/>
        </authorList>
    </citation>
    <scope>NUCLEOTIDE SEQUENCE [LARGE SCALE GENOMIC DNA]</scope>
    <source>
        <strain>Y51</strain>
    </source>
</reference>
<organism>
    <name type="scientific">Desulfitobacterium hafniense (strain Y51)</name>
    <dbReference type="NCBI Taxonomy" id="138119"/>
    <lineage>
        <taxon>Bacteria</taxon>
        <taxon>Bacillati</taxon>
        <taxon>Bacillota</taxon>
        <taxon>Clostridia</taxon>
        <taxon>Eubacteriales</taxon>
        <taxon>Desulfitobacteriaceae</taxon>
        <taxon>Desulfitobacterium</taxon>
    </lineage>
</organism>
<evidence type="ECO:0000255" key="1">
    <source>
        <dbReference type="HAMAP-Rule" id="MF_00412"/>
    </source>
</evidence>
<proteinExistence type="inferred from homology"/>
<name>PROA_DESHY</name>
<dbReference type="EC" id="1.2.1.41" evidence="1"/>
<dbReference type="EMBL" id="AP008230">
    <property type="protein sequence ID" value="BAE83176.1"/>
    <property type="molecule type" value="Genomic_DNA"/>
</dbReference>
<dbReference type="RefSeq" id="WP_011459658.1">
    <property type="nucleotide sequence ID" value="NC_007907.1"/>
</dbReference>
<dbReference type="SMR" id="Q24XR6"/>
<dbReference type="STRING" id="138119.DSY1387"/>
<dbReference type="KEGG" id="dsy:DSY1387"/>
<dbReference type="eggNOG" id="COG0014">
    <property type="taxonomic scope" value="Bacteria"/>
</dbReference>
<dbReference type="HOGENOM" id="CLU_030231_0_0_9"/>
<dbReference type="UniPathway" id="UPA00098">
    <property type="reaction ID" value="UER00360"/>
</dbReference>
<dbReference type="Proteomes" id="UP000001946">
    <property type="component" value="Chromosome"/>
</dbReference>
<dbReference type="GO" id="GO:0005737">
    <property type="term" value="C:cytoplasm"/>
    <property type="evidence" value="ECO:0007669"/>
    <property type="project" value="UniProtKB-SubCell"/>
</dbReference>
<dbReference type="GO" id="GO:0004350">
    <property type="term" value="F:glutamate-5-semialdehyde dehydrogenase activity"/>
    <property type="evidence" value="ECO:0007669"/>
    <property type="project" value="UniProtKB-UniRule"/>
</dbReference>
<dbReference type="GO" id="GO:0050661">
    <property type="term" value="F:NADP binding"/>
    <property type="evidence" value="ECO:0007669"/>
    <property type="project" value="InterPro"/>
</dbReference>
<dbReference type="GO" id="GO:0055129">
    <property type="term" value="P:L-proline biosynthetic process"/>
    <property type="evidence" value="ECO:0007669"/>
    <property type="project" value="UniProtKB-UniRule"/>
</dbReference>
<dbReference type="CDD" id="cd07079">
    <property type="entry name" value="ALDH_F18-19_ProA-GPR"/>
    <property type="match status" value="1"/>
</dbReference>
<dbReference type="FunFam" id="3.40.309.10:FF:000006">
    <property type="entry name" value="Gamma-glutamyl phosphate reductase"/>
    <property type="match status" value="1"/>
</dbReference>
<dbReference type="Gene3D" id="3.40.605.10">
    <property type="entry name" value="Aldehyde Dehydrogenase, Chain A, domain 1"/>
    <property type="match status" value="1"/>
</dbReference>
<dbReference type="Gene3D" id="3.40.309.10">
    <property type="entry name" value="Aldehyde Dehydrogenase, Chain A, domain 2"/>
    <property type="match status" value="1"/>
</dbReference>
<dbReference type="HAMAP" id="MF_00412">
    <property type="entry name" value="ProA"/>
    <property type="match status" value="1"/>
</dbReference>
<dbReference type="InterPro" id="IPR016161">
    <property type="entry name" value="Ald_DH/histidinol_DH"/>
</dbReference>
<dbReference type="InterPro" id="IPR016163">
    <property type="entry name" value="Ald_DH_C"/>
</dbReference>
<dbReference type="InterPro" id="IPR016162">
    <property type="entry name" value="Ald_DH_N"/>
</dbReference>
<dbReference type="InterPro" id="IPR015590">
    <property type="entry name" value="Aldehyde_DH_dom"/>
</dbReference>
<dbReference type="InterPro" id="IPR020593">
    <property type="entry name" value="G-glutamylP_reductase_CS"/>
</dbReference>
<dbReference type="InterPro" id="IPR012134">
    <property type="entry name" value="Glu-5-SA_DH"/>
</dbReference>
<dbReference type="InterPro" id="IPR000965">
    <property type="entry name" value="GPR_dom"/>
</dbReference>
<dbReference type="NCBIfam" id="NF001221">
    <property type="entry name" value="PRK00197.1"/>
    <property type="match status" value="1"/>
</dbReference>
<dbReference type="NCBIfam" id="TIGR00407">
    <property type="entry name" value="proA"/>
    <property type="match status" value="1"/>
</dbReference>
<dbReference type="PANTHER" id="PTHR11063:SF8">
    <property type="entry name" value="DELTA-1-PYRROLINE-5-CARBOXYLATE SYNTHASE"/>
    <property type="match status" value="1"/>
</dbReference>
<dbReference type="PANTHER" id="PTHR11063">
    <property type="entry name" value="GLUTAMATE SEMIALDEHYDE DEHYDROGENASE"/>
    <property type="match status" value="1"/>
</dbReference>
<dbReference type="Pfam" id="PF00171">
    <property type="entry name" value="Aldedh"/>
    <property type="match status" value="1"/>
</dbReference>
<dbReference type="PIRSF" id="PIRSF000151">
    <property type="entry name" value="GPR"/>
    <property type="match status" value="1"/>
</dbReference>
<dbReference type="SUPFAM" id="SSF53720">
    <property type="entry name" value="ALDH-like"/>
    <property type="match status" value="1"/>
</dbReference>
<dbReference type="PROSITE" id="PS01223">
    <property type="entry name" value="PROA"/>
    <property type="match status" value="1"/>
</dbReference>
<gene>
    <name evidence="1" type="primary">proA</name>
    <name type="ordered locus">DSY1387</name>
</gene>